<proteinExistence type="inferred from homology"/>
<evidence type="ECO:0000255" key="1">
    <source>
        <dbReference type="HAMAP-Rule" id="MF_01102"/>
    </source>
</evidence>
<sequence>MKGPQLDYADLSWSDNGAPISNAYGDIYFSKESGPEETDYVFLTGNRLRERFSNAPPGSLFTIAETGFGSGLNFLMAWALWRECGPADGHLHFTSVEFCPLAREDLVRCHQAWPQLAEFARQLRAQYPAPMQGVHRCRFVDQGVTLTLYLGDVVDWLSDCSFKADAWFLDGFSPKQNPEMWSESLFPLIASHAAQGCTVATFSAAGFIRRGLKEHGFNVSKAPGFGYKRDMTVGVFQAEEPNQPAALPHKEAVVIGSGLSGANVAYALATRGWKVTVLEAADRIAPEASGNPQGALYIKPGVEWSINTRIHANAFLYAERFYSEIANLPTPIWNPCGVLQLAHNDKEAVRQQKFFQHNRYPDEVIRPFTHQEASELAGVSLPASAMYLPGGGWLIPPQLCAHMLQHPNIEVRLNSPVTALERTDEGGWLIHIGSGESAQELECAILILATANNQAMQPAAASALPLKPIRGQVTTLQVESAALPQLNTVLCGEGYLMPPIADRLVTGATFKPNCADAQVTEADNNANLEQLLQLTPALRDELSKHPPTLQGRASVRSALPDYLPAIGPLIPGQGGKGLLIVTAMGSKGLALAPLAGELVADMLEGTPAPIEDSLVQRVLPNRFSQE</sequence>
<protein>
    <recommendedName>
        <fullName evidence="1">tRNA 5-methylaminomethyl-2-thiouridine biosynthesis bifunctional protein MnmC</fullName>
        <shortName evidence="1">tRNA mnm(5)s(2)U biosynthesis bifunctional protein</shortName>
    </recommendedName>
    <domain>
        <recommendedName>
            <fullName evidence="1">tRNA (mnm(5)s(2)U34)-methyltransferase</fullName>
            <ecNumber evidence="1">2.1.1.61</ecNumber>
        </recommendedName>
    </domain>
    <domain>
        <recommendedName>
            <fullName evidence="1">FAD-dependent cmnm(5)s(2)U34 oxidoreductase</fullName>
            <ecNumber evidence="1">1.5.-.-</ecNumber>
        </recommendedName>
    </domain>
</protein>
<comment type="function">
    <text evidence="1">Catalyzes the last two steps in the biosynthesis of 5-methylaminomethyl-2-thiouridine (mnm(5)s(2)U) at the wobble position (U34) in tRNA. Catalyzes the FAD-dependent demodification of cmnm(5)s(2)U34 to nm(5)s(2)U34, followed by the transfer of a methyl group from S-adenosyl-L-methionine to nm(5)s(2)U34, to form mnm(5)s(2)U34.</text>
</comment>
<comment type="catalytic activity">
    <reaction evidence="1">
        <text>5-aminomethyl-2-thiouridine(34) in tRNA + S-adenosyl-L-methionine = 5-methylaminomethyl-2-thiouridine(34) in tRNA + S-adenosyl-L-homocysteine + H(+)</text>
        <dbReference type="Rhea" id="RHEA:19569"/>
        <dbReference type="Rhea" id="RHEA-COMP:10195"/>
        <dbReference type="Rhea" id="RHEA-COMP:10197"/>
        <dbReference type="ChEBI" id="CHEBI:15378"/>
        <dbReference type="ChEBI" id="CHEBI:57856"/>
        <dbReference type="ChEBI" id="CHEBI:59789"/>
        <dbReference type="ChEBI" id="CHEBI:74454"/>
        <dbReference type="ChEBI" id="CHEBI:74455"/>
        <dbReference type="EC" id="2.1.1.61"/>
    </reaction>
</comment>
<comment type="cofactor">
    <cofactor evidence="1">
        <name>FAD</name>
        <dbReference type="ChEBI" id="CHEBI:57692"/>
    </cofactor>
</comment>
<comment type="subcellular location">
    <subcellularLocation>
        <location evidence="1">Cytoplasm</location>
    </subcellularLocation>
</comment>
<comment type="similarity">
    <text evidence="1">In the N-terminal section; belongs to the methyltransferase superfamily. tRNA (mnm(5)s(2)U34)-methyltransferase family.</text>
</comment>
<comment type="similarity">
    <text evidence="1">In the C-terminal section; belongs to the DAO family.</text>
</comment>
<dbReference type="EC" id="2.1.1.61" evidence="1"/>
<dbReference type="EC" id="1.5.-.-" evidence="1"/>
<dbReference type="EMBL" id="CP000155">
    <property type="protein sequence ID" value="ABC31424.1"/>
    <property type="molecule type" value="Genomic_DNA"/>
</dbReference>
<dbReference type="RefSeq" id="WP_011398489.1">
    <property type="nucleotide sequence ID" value="NC_007645.1"/>
</dbReference>
<dbReference type="SMR" id="Q2SD50"/>
<dbReference type="STRING" id="349521.HCH_04726"/>
<dbReference type="KEGG" id="hch:HCH_04726"/>
<dbReference type="eggNOG" id="COG0665">
    <property type="taxonomic scope" value="Bacteria"/>
</dbReference>
<dbReference type="eggNOG" id="COG4121">
    <property type="taxonomic scope" value="Bacteria"/>
</dbReference>
<dbReference type="HOGENOM" id="CLU_022427_1_0_6"/>
<dbReference type="OrthoDB" id="9786494at2"/>
<dbReference type="Proteomes" id="UP000000238">
    <property type="component" value="Chromosome"/>
</dbReference>
<dbReference type="GO" id="GO:0005737">
    <property type="term" value="C:cytoplasm"/>
    <property type="evidence" value="ECO:0007669"/>
    <property type="project" value="UniProtKB-SubCell"/>
</dbReference>
<dbReference type="GO" id="GO:0050660">
    <property type="term" value="F:flavin adenine dinucleotide binding"/>
    <property type="evidence" value="ECO:0007669"/>
    <property type="project" value="UniProtKB-UniRule"/>
</dbReference>
<dbReference type="GO" id="GO:0016645">
    <property type="term" value="F:oxidoreductase activity, acting on the CH-NH group of donors"/>
    <property type="evidence" value="ECO:0007669"/>
    <property type="project" value="InterPro"/>
</dbReference>
<dbReference type="GO" id="GO:0004808">
    <property type="term" value="F:tRNA (5-methylaminomethyl-2-thiouridylate)(34)-methyltransferase activity"/>
    <property type="evidence" value="ECO:0007669"/>
    <property type="project" value="UniProtKB-EC"/>
</dbReference>
<dbReference type="GO" id="GO:0032259">
    <property type="term" value="P:methylation"/>
    <property type="evidence" value="ECO:0007669"/>
    <property type="project" value="UniProtKB-KW"/>
</dbReference>
<dbReference type="GO" id="GO:0002098">
    <property type="term" value="P:tRNA wobble uridine modification"/>
    <property type="evidence" value="ECO:0007669"/>
    <property type="project" value="TreeGrafter"/>
</dbReference>
<dbReference type="Gene3D" id="3.30.9.10">
    <property type="entry name" value="D-Amino Acid Oxidase, subunit A, domain 2"/>
    <property type="match status" value="1"/>
</dbReference>
<dbReference type="Gene3D" id="3.50.50.60">
    <property type="entry name" value="FAD/NAD(P)-binding domain"/>
    <property type="match status" value="1"/>
</dbReference>
<dbReference type="Gene3D" id="3.40.50.150">
    <property type="entry name" value="Vaccinia Virus protein VP39"/>
    <property type="match status" value="1"/>
</dbReference>
<dbReference type="HAMAP" id="MF_01102">
    <property type="entry name" value="MnmC"/>
    <property type="match status" value="1"/>
</dbReference>
<dbReference type="InterPro" id="IPR006076">
    <property type="entry name" value="FAD-dep_OxRdtase"/>
</dbReference>
<dbReference type="InterPro" id="IPR036188">
    <property type="entry name" value="FAD/NAD-bd_sf"/>
</dbReference>
<dbReference type="InterPro" id="IPR008471">
    <property type="entry name" value="MnmC-like_methylTransf"/>
</dbReference>
<dbReference type="InterPro" id="IPR029063">
    <property type="entry name" value="SAM-dependent_MTases_sf"/>
</dbReference>
<dbReference type="InterPro" id="IPR023032">
    <property type="entry name" value="tRNA_MAMT_biosynth_bifunc_MnmC"/>
</dbReference>
<dbReference type="InterPro" id="IPR047785">
    <property type="entry name" value="tRNA_MNMC2"/>
</dbReference>
<dbReference type="InterPro" id="IPR017610">
    <property type="entry name" value="tRNA_S-uridine_synth_MnmC_C"/>
</dbReference>
<dbReference type="NCBIfam" id="TIGR03197">
    <property type="entry name" value="MnmC_Cterm"/>
    <property type="match status" value="1"/>
</dbReference>
<dbReference type="NCBIfam" id="NF002481">
    <property type="entry name" value="PRK01747.1-2"/>
    <property type="match status" value="1"/>
</dbReference>
<dbReference type="NCBIfam" id="NF033855">
    <property type="entry name" value="tRNA_MNMC2"/>
    <property type="match status" value="1"/>
</dbReference>
<dbReference type="PANTHER" id="PTHR13847">
    <property type="entry name" value="SARCOSINE DEHYDROGENASE-RELATED"/>
    <property type="match status" value="1"/>
</dbReference>
<dbReference type="PANTHER" id="PTHR13847:SF283">
    <property type="entry name" value="TRNA 5-METHYLAMINOMETHYL-2-THIOURIDINE BIOSYNTHESIS BIFUNCTIONAL PROTEIN MNMC"/>
    <property type="match status" value="1"/>
</dbReference>
<dbReference type="Pfam" id="PF01266">
    <property type="entry name" value="DAO"/>
    <property type="match status" value="1"/>
</dbReference>
<dbReference type="Pfam" id="PF05430">
    <property type="entry name" value="Methyltransf_30"/>
    <property type="match status" value="1"/>
</dbReference>
<dbReference type="SUPFAM" id="SSF54373">
    <property type="entry name" value="FAD-linked reductases, C-terminal domain"/>
    <property type="match status" value="1"/>
</dbReference>
<dbReference type="SUPFAM" id="SSF51905">
    <property type="entry name" value="FAD/NAD(P)-binding domain"/>
    <property type="match status" value="1"/>
</dbReference>
<name>MNMC_HAHCH</name>
<reference key="1">
    <citation type="journal article" date="2005" name="Nucleic Acids Res.">
        <title>Genomic blueprint of Hahella chejuensis, a marine microbe producing an algicidal agent.</title>
        <authorList>
            <person name="Jeong H."/>
            <person name="Yim J.H."/>
            <person name="Lee C."/>
            <person name="Choi S.-H."/>
            <person name="Park Y.K."/>
            <person name="Yoon S.H."/>
            <person name="Hur C.-G."/>
            <person name="Kang H.-Y."/>
            <person name="Kim D."/>
            <person name="Lee H.H."/>
            <person name="Park K.H."/>
            <person name="Park S.-H."/>
            <person name="Park H.-S."/>
            <person name="Lee H.K."/>
            <person name="Oh T.K."/>
            <person name="Kim J.F."/>
        </authorList>
    </citation>
    <scope>NUCLEOTIDE SEQUENCE [LARGE SCALE GENOMIC DNA]</scope>
    <source>
        <strain>KCTC 2396</strain>
    </source>
</reference>
<accession>Q2SD50</accession>
<keyword id="KW-0963">Cytoplasm</keyword>
<keyword id="KW-0274">FAD</keyword>
<keyword id="KW-0285">Flavoprotein</keyword>
<keyword id="KW-0489">Methyltransferase</keyword>
<keyword id="KW-0511">Multifunctional enzyme</keyword>
<keyword id="KW-0560">Oxidoreductase</keyword>
<keyword id="KW-1185">Reference proteome</keyword>
<keyword id="KW-0949">S-adenosyl-L-methionine</keyword>
<keyword id="KW-0808">Transferase</keyword>
<keyword id="KW-0819">tRNA processing</keyword>
<organism>
    <name type="scientific">Hahella chejuensis (strain KCTC 2396)</name>
    <dbReference type="NCBI Taxonomy" id="349521"/>
    <lineage>
        <taxon>Bacteria</taxon>
        <taxon>Pseudomonadati</taxon>
        <taxon>Pseudomonadota</taxon>
        <taxon>Gammaproteobacteria</taxon>
        <taxon>Oceanospirillales</taxon>
        <taxon>Hahellaceae</taxon>
        <taxon>Hahella</taxon>
    </lineage>
</organism>
<gene>
    <name evidence="1" type="primary">mnmC</name>
    <name type="ordered locus">HCH_04726</name>
</gene>
<feature type="chain" id="PRO_0000347987" description="tRNA 5-methylaminomethyl-2-thiouridine biosynthesis bifunctional protein MnmC">
    <location>
        <begin position="1"/>
        <end position="626"/>
    </location>
</feature>
<feature type="region of interest" description="tRNA (mnm(5)s(2)U34)-methyltransferase">
    <location>
        <begin position="1"/>
        <end position="237"/>
    </location>
</feature>
<feature type="region of interest" description="FAD-dependent cmnm(5)s(2)U34 oxidoreductase">
    <location>
        <begin position="255"/>
        <end position="626"/>
    </location>
</feature>